<reference key="1">
    <citation type="journal article" date="1999" name="Arch. Androl.">
        <title>Expression and characterization of an epididymis-specific gene.</title>
        <authorList>
            <person name="Fan H.-Y."/>
            <person name="Miao S.-Y."/>
            <person name="Wang L.-F."/>
            <person name="Koide S.S."/>
        </authorList>
    </citation>
    <scope>NUCLEOTIDE SEQUENCE [MRNA]</scope>
    <scope>SEQUENCE REVISION TO 29</scope>
    <source>
        <tissue>Epididymis</tissue>
    </source>
</reference>
<reference key="2">
    <citation type="journal article" date="1996" name="Arch. Androl.">
        <title>Identification of a rabbit epididymal protein gene.</title>
        <authorList>
            <person name="Xu W.D."/>
            <person name="Wang L.-F."/>
            <person name="Miao S.-Y."/>
            <person name="Zhao M."/>
            <person name="Fan H.-Y."/>
            <person name="Zong S.D."/>
            <person name="Wu Y.W."/>
            <person name="Shi X.Q."/>
            <person name="Koide S.S."/>
        </authorList>
    </citation>
    <scope>NUCLEOTIDE SEQUENCE [MRNA] OF 29-123</scope>
    <scope>PROTEIN SEQUENCE OF 29-58</scope>
    <source>
        <tissue>Epididymis</tissue>
    </source>
</reference>
<gene>
    <name type="primary">WFDC2</name>
</gene>
<keyword id="KW-0062">Aspartic protease inhibitor</keyword>
<keyword id="KW-0903">Direct protein sequencing</keyword>
<keyword id="KW-1015">Disulfide bond</keyword>
<keyword id="KW-0325">Glycoprotein</keyword>
<keyword id="KW-0646">Protease inhibitor</keyword>
<keyword id="KW-1185">Reference proteome</keyword>
<keyword id="KW-0677">Repeat</keyword>
<keyword id="KW-0964">Secreted</keyword>
<keyword id="KW-0722">Serine protease inhibitor</keyword>
<keyword id="KW-0732">Signal</keyword>
<keyword id="KW-0789">Thiol protease inhibitor</keyword>
<proteinExistence type="evidence at protein level"/>
<feature type="signal peptide" evidence="4">
    <location>
        <begin position="1"/>
        <end position="28"/>
    </location>
</feature>
<feature type="chain" id="PRO_0000041373" description="WAP four-disulfide core domain protein 2">
    <location>
        <begin position="29"/>
        <end position="123"/>
    </location>
</feature>
<feature type="domain" description="WAP 1" evidence="3">
    <location>
        <begin position="30"/>
        <end position="71"/>
    </location>
</feature>
<feature type="domain" description="WAP 2" evidence="3">
    <location>
        <begin position="74"/>
        <end position="122"/>
    </location>
</feature>
<feature type="glycosylation site" description="N-linked (GlcNAc...) asparagine" evidence="2">
    <location>
        <position position="45"/>
    </location>
</feature>
<feature type="disulfide bond" evidence="3">
    <location>
        <begin position="37"/>
        <end position="63"/>
    </location>
</feature>
<feature type="disulfide bond" evidence="3">
    <location>
        <begin position="46"/>
        <end position="67"/>
    </location>
</feature>
<feature type="disulfide bond" evidence="3">
    <location>
        <begin position="50"/>
        <end position="62"/>
    </location>
</feature>
<feature type="disulfide bond" evidence="3">
    <location>
        <begin position="56"/>
        <end position="71"/>
    </location>
</feature>
<feature type="disulfide bond" evidence="3">
    <location>
        <begin position="81"/>
        <end position="109"/>
    </location>
</feature>
<feature type="disulfide bond" evidence="3">
    <location>
        <begin position="92"/>
        <end position="113"/>
    </location>
</feature>
<feature type="disulfide bond" evidence="3">
    <location>
        <begin position="96"/>
        <end position="108"/>
    </location>
</feature>
<feature type="disulfide bond" evidence="3">
    <location>
        <begin position="102"/>
        <end position="118"/>
    </location>
</feature>
<evidence type="ECO:0000250" key="1"/>
<evidence type="ECO:0000255" key="2"/>
<evidence type="ECO:0000255" key="3">
    <source>
        <dbReference type="PROSITE-ProRule" id="PRU00722"/>
    </source>
</evidence>
<evidence type="ECO:0000269" key="4">
    <source>
    </source>
</evidence>
<accession>Q28631</accession>
<comment type="function">
    <text evidence="1">Broad range protease inhibitor.</text>
</comment>
<comment type="subunit">
    <text evidence="1">Homotrimer; disulfide-linked.</text>
</comment>
<comment type="subcellular location">
    <subcellularLocation>
        <location>Secreted</location>
    </subcellularLocation>
</comment>
<comment type="tissue specificity">
    <text>Epididymis.</text>
</comment>
<protein>
    <recommendedName>
        <fullName>WAP four-disulfide core domain protein 2</fullName>
    </recommendedName>
    <alternativeName>
        <fullName>Epididymal protein BE-20</fullName>
    </alternativeName>
    <alternativeName>
        <fullName>Major epididymis-specific protein E4</fullName>
    </alternativeName>
</protein>
<organism>
    <name type="scientific">Oryctolagus cuniculus</name>
    <name type="common">Rabbit</name>
    <dbReference type="NCBI Taxonomy" id="9986"/>
    <lineage>
        <taxon>Eukaryota</taxon>
        <taxon>Metazoa</taxon>
        <taxon>Chordata</taxon>
        <taxon>Craniata</taxon>
        <taxon>Vertebrata</taxon>
        <taxon>Euteleostomi</taxon>
        <taxon>Mammalia</taxon>
        <taxon>Eutheria</taxon>
        <taxon>Euarchontoglires</taxon>
        <taxon>Glires</taxon>
        <taxon>Lagomorpha</taxon>
        <taxon>Leporidae</taxon>
        <taxon>Oryctolagus</taxon>
    </lineage>
</organism>
<dbReference type="EMBL" id="U26725">
    <property type="protein sequence ID" value="AAA66525.2"/>
    <property type="molecule type" value="mRNA"/>
</dbReference>
<dbReference type="RefSeq" id="NP_001075823.1">
    <property type="nucleotide sequence ID" value="NM_001082354.1"/>
</dbReference>
<dbReference type="SMR" id="Q28631"/>
<dbReference type="STRING" id="9986.ENSOCUP00000043337"/>
<dbReference type="MEROPS" id="I17.004"/>
<dbReference type="GlyCosmos" id="Q28631">
    <property type="glycosylation" value="1 site, No reported glycans"/>
</dbReference>
<dbReference type="PaxDb" id="9986-ENSOCUP00000008219"/>
<dbReference type="GeneID" id="100009206"/>
<dbReference type="KEGG" id="ocu:100009206"/>
<dbReference type="CTD" id="10406"/>
<dbReference type="eggNOG" id="ENOG502SA8J">
    <property type="taxonomic scope" value="Eukaryota"/>
</dbReference>
<dbReference type="InParanoid" id="Q28631"/>
<dbReference type="OrthoDB" id="6060011at2759"/>
<dbReference type="Proteomes" id="UP000001811">
    <property type="component" value="Unplaced"/>
</dbReference>
<dbReference type="GO" id="GO:0005615">
    <property type="term" value="C:extracellular space"/>
    <property type="evidence" value="ECO:0007669"/>
    <property type="project" value="TreeGrafter"/>
</dbReference>
<dbReference type="GO" id="GO:0019828">
    <property type="term" value="F:aspartic-type endopeptidase inhibitor activity"/>
    <property type="evidence" value="ECO:0007669"/>
    <property type="project" value="UniProtKB-KW"/>
</dbReference>
<dbReference type="GO" id="GO:0004869">
    <property type="term" value="F:cysteine-type endopeptidase inhibitor activity"/>
    <property type="evidence" value="ECO:0007669"/>
    <property type="project" value="UniProtKB-KW"/>
</dbReference>
<dbReference type="GO" id="GO:0004867">
    <property type="term" value="F:serine-type endopeptidase inhibitor activity"/>
    <property type="evidence" value="ECO:0007669"/>
    <property type="project" value="UniProtKB-KW"/>
</dbReference>
<dbReference type="GO" id="GO:0019731">
    <property type="term" value="P:antibacterial humoral response"/>
    <property type="evidence" value="ECO:0007669"/>
    <property type="project" value="TreeGrafter"/>
</dbReference>
<dbReference type="GO" id="GO:0045087">
    <property type="term" value="P:innate immune response"/>
    <property type="evidence" value="ECO:0007669"/>
    <property type="project" value="TreeGrafter"/>
</dbReference>
<dbReference type="CDD" id="cd00199">
    <property type="entry name" value="WAP"/>
    <property type="match status" value="1"/>
</dbReference>
<dbReference type="FunFam" id="4.10.75.10:FF:000001">
    <property type="entry name" value="Anosmin 1"/>
    <property type="match status" value="1"/>
</dbReference>
<dbReference type="Gene3D" id="4.10.75.10">
    <property type="entry name" value="Elafin-like"/>
    <property type="match status" value="2"/>
</dbReference>
<dbReference type="InterPro" id="IPR036645">
    <property type="entry name" value="Elafin-like_sf"/>
</dbReference>
<dbReference type="InterPro" id="IPR008197">
    <property type="entry name" value="WAP_dom"/>
</dbReference>
<dbReference type="InterPro" id="IPR050514">
    <property type="entry name" value="WAP_four-disulfide_core"/>
</dbReference>
<dbReference type="PANTHER" id="PTHR19441:SF34">
    <property type="entry name" value="WAP FOUR-DISULFIDE CORE DOMAIN PROTEIN 2"/>
    <property type="match status" value="1"/>
</dbReference>
<dbReference type="PANTHER" id="PTHR19441">
    <property type="entry name" value="WHEY ACDIC PROTEIN WAP"/>
    <property type="match status" value="1"/>
</dbReference>
<dbReference type="Pfam" id="PF00095">
    <property type="entry name" value="WAP"/>
    <property type="match status" value="2"/>
</dbReference>
<dbReference type="PRINTS" id="PR00003">
    <property type="entry name" value="4DISULPHCORE"/>
</dbReference>
<dbReference type="SMART" id="SM00217">
    <property type="entry name" value="WAP"/>
    <property type="match status" value="2"/>
</dbReference>
<dbReference type="SUPFAM" id="SSF57256">
    <property type="entry name" value="Elafin-like"/>
    <property type="match status" value="2"/>
</dbReference>
<dbReference type="PROSITE" id="PS51390">
    <property type="entry name" value="WAP"/>
    <property type="match status" value="2"/>
</dbReference>
<sequence length="123" mass="12803">MPASRLVPLGAVLLLGLLLLLELPPVTGTGADKPGVCPQLSADLNCTQDCRADQDCAENLKCCRAGCSAICSIPNEKEGSCPSIDFPQLGICQDLCQVDSQCPGKMKCCLNGCGKVSCVTPNF</sequence>
<name>WFDC2_RABIT</name>